<sequence>MKTNKIVFIFGPTAVGKSDILFHFPKGVAEVISVDSIQVYKEFDIASCKPSIELRSHIRHHLVDFLEPIYEYNLGIFYKESCKIIESLREQKKIPIFVGGSAFYFKHLKYGLPSAPPVSEKVRLYINNLFIKMGKDYLLEELRRVDFKRYESINQNDIYRIKRSLEVYYQTGIPISQFLQRENMFENIVAIGLRRPMDEMKSRIISRVKNMIDCGLLDEIKSLLGKGYDEKTPAFKGIGYREFLLWRSRPCYLLNDIINLIVKNSFLYVKRQMTFFNKLPNVLWFHPDDDLKNILDLIFV</sequence>
<organism>
    <name type="scientific">Borrelia duttonii (strain Ly)</name>
    <dbReference type="NCBI Taxonomy" id="412419"/>
    <lineage>
        <taxon>Bacteria</taxon>
        <taxon>Pseudomonadati</taxon>
        <taxon>Spirochaetota</taxon>
        <taxon>Spirochaetia</taxon>
        <taxon>Spirochaetales</taxon>
        <taxon>Borreliaceae</taxon>
        <taxon>Borrelia</taxon>
    </lineage>
</organism>
<protein>
    <recommendedName>
        <fullName evidence="1">tRNA dimethylallyltransferase</fullName>
        <ecNumber evidence="1">2.5.1.75</ecNumber>
    </recommendedName>
    <alternativeName>
        <fullName evidence="1">Dimethylallyl diphosphate:tRNA dimethylallyltransferase</fullName>
        <shortName evidence="1">DMAPP:tRNA dimethylallyltransferase</shortName>
        <shortName evidence="1">DMATase</shortName>
    </alternativeName>
    <alternativeName>
        <fullName evidence="1">Isopentenyl-diphosphate:tRNA isopentenyltransferase</fullName>
        <shortName evidence="1">IPP transferase</shortName>
        <shortName evidence="1">IPPT</shortName>
        <shortName evidence="1">IPTase</shortName>
    </alternativeName>
</protein>
<accession>B5RN19</accession>
<keyword id="KW-0067">ATP-binding</keyword>
<keyword id="KW-0460">Magnesium</keyword>
<keyword id="KW-0547">Nucleotide-binding</keyword>
<keyword id="KW-0808">Transferase</keyword>
<keyword id="KW-0819">tRNA processing</keyword>
<dbReference type="EC" id="2.5.1.75" evidence="1"/>
<dbReference type="EMBL" id="CP000976">
    <property type="protein sequence ID" value="ACH93755.1"/>
    <property type="molecule type" value="Genomic_DNA"/>
</dbReference>
<dbReference type="RefSeq" id="WP_012538560.1">
    <property type="nucleotide sequence ID" value="NC_011229.1"/>
</dbReference>
<dbReference type="SMR" id="B5RN19"/>
<dbReference type="STRING" id="412419.BDU_833"/>
<dbReference type="KEGG" id="bdu:BDU_833"/>
<dbReference type="eggNOG" id="COG0324">
    <property type="taxonomic scope" value="Bacteria"/>
</dbReference>
<dbReference type="HOGENOM" id="CLU_032616_0_2_12"/>
<dbReference type="OrthoDB" id="9776390at2"/>
<dbReference type="Proteomes" id="UP000000611">
    <property type="component" value="Chromosome"/>
</dbReference>
<dbReference type="GO" id="GO:0005524">
    <property type="term" value="F:ATP binding"/>
    <property type="evidence" value="ECO:0007669"/>
    <property type="project" value="UniProtKB-UniRule"/>
</dbReference>
<dbReference type="GO" id="GO:0052381">
    <property type="term" value="F:tRNA dimethylallyltransferase activity"/>
    <property type="evidence" value="ECO:0007669"/>
    <property type="project" value="UniProtKB-UniRule"/>
</dbReference>
<dbReference type="GO" id="GO:0006400">
    <property type="term" value="P:tRNA modification"/>
    <property type="evidence" value="ECO:0007669"/>
    <property type="project" value="TreeGrafter"/>
</dbReference>
<dbReference type="Gene3D" id="1.10.20.140">
    <property type="match status" value="1"/>
</dbReference>
<dbReference type="Gene3D" id="3.40.50.300">
    <property type="entry name" value="P-loop containing nucleotide triphosphate hydrolases"/>
    <property type="match status" value="1"/>
</dbReference>
<dbReference type="HAMAP" id="MF_00185">
    <property type="entry name" value="IPP_trans"/>
    <property type="match status" value="1"/>
</dbReference>
<dbReference type="InterPro" id="IPR039657">
    <property type="entry name" value="Dimethylallyltransferase"/>
</dbReference>
<dbReference type="InterPro" id="IPR018022">
    <property type="entry name" value="IPT"/>
</dbReference>
<dbReference type="InterPro" id="IPR027417">
    <property type="entry name" value="P-loop_NTPase"/>
</dbReference>
<dbReference type="NCBIfam" id="TIGR00174">
    <property type="entry name" value="miaA"/>
    <property type="match status" value="1"/>
</dbReference>
<dbReference type="PANTHER" id="PTHR11088">
    <property type="entry name" value="TRNA DIMETHYLALLYLTRANSFERASE"/>
    <property type="match status" value="1"/>
</dbReference>
<dbReference type="PANTHER" id="PTHR11088:SF60">
    <property type="entry name" value="TRNA DIMETHYLALLYLTRANSFERASE"/>
    <property type="match status" value="1"/>
</dbReference>
<dbReference type="Pfam" id="PF01715">
    <property type="entry name" value="IPPT"/>
    <property type="match status" value="1"/>
</dbReference>
<dbReference type="SUPFAM" id="SSF52540">
    <property type="entry name" value="P-loop containing nucleoside triphosphate hydrolases"/>
    <property type="match status" value="1"/>
</dbReference>
<comment type="function">
    <text evidence="1">Catalyzes the transfer of a dimethylallyl group onto the adenine at position 37 in tRNAs that read codons beginning with uridine, leading to the formation of N6-(dimethylallyl)adenosine (i(6)A).</text>
</comment>
<comment type="catalytic activity">
    <reaction evidence="1">
        <text>adenosine(37) in tRNA + dimethylallyl diphosphate = N(6)-dimethylallyladenosine(37) in tRNA + diphosphate</text>
        <dbReference type="Rhea" id="RHEA:26482"/>
        <dbReference type="Rhea" id="RHEA-COMP:10162"/>
        <dbReference type="Rhea" id="RHEA-COMP:10375"/>
        <dbReference type="ChEBI" id="CHEBI:33019"/>
        <dbReference type="ChEBI" id="CHEBI:57623"/>
        <dbReference type="ChEBI" id="CHEBI:74411"/>
        <dbReference type="ChEBI" id="CHEBI:74415"/>
        <dbReference type="EC" id="2.5.1.75"/>
    </reaction>
</comment>
<comment type="cofactor">
    <cofactor evidence="1">
        <name>Mg(2+)</name>
        <dbReference type="ChEBI" id="CHEBI:18420"/>
    </cofactor>
</comment>
<comment type="subunit">
    <text evidence="1">Monomer.</text>
</comment>
<comment type="similarity">
    <text evidence="1">Belongs to the IPP transferase family.</text>
</comment>
<reference key="1">
    <citation type="journal article" date="2008" name="PLoS Genet.">
        <title>The genome of Borrelia recurrentis, the agent of deadly louse-borne relapsing fever, is a degraded subset of tick-borne Borrelia duttonii.</title>
        <authorList>
            <person name="Lescot M."/>
            <person name="Audic S."/>
            <person name="Robert C."/>
            <person name="Nguyen T.T."/>
            <person name="Blanc G."/>
            <person name="Cutler S.J."/>
            <person name="Wincker P."/>
            <person name="Couloux A."/>
            <person name="Claverie J.-M."/>
            <person name="Raoult D."/>
            <person name="Drancourt M."/>
        </authorList>
    </citation>
    <scope>NUCLEOTIDE SEQUENCE [LARGE SCALE GENOMIC DNA]</scope>
    <source>
        <strain>Ly</strain>
    </source>
</reference>
<proteinExistence type="inferred from homology"/>
<feature type="chain" id="PRO_1000098643" description="tRNA dimethylallyltransferase">
    <location>
        <begin position="1"/>
        <end position="300"/>
    </location>
</feature>
<feature type="region of interest" description="Interaction with substrate tRNA" evidence="1">
    <location>
        <begin position="35"/>
        <end position="38"/>
    </location>
</feature>
<feature type="binding site" evidence="1">
    <location>
        <begin position="11"/>
        <end position="18"/>
    </location>
    <ligand>
        <name>ATP</name>
        <dbReference type="ChEBI" id="CHEBI:30616"/>
    </ligand>
</feature>
<feature type="binding site" evidence="1">
    <location>
        <begin position="13"/>
        <end position="18"/>
    </location>
    <ligand>
        <name>substrate</name>
    </ligand>
</feature>
<feature type="site" description="Interaction with substrate tRNA" evidence="1">
    <location>
        <position position="101"/>
    </location>
</feature>
<feature type="site" description="Interaction with substrate tRNA" evidence="1">
    <location>
        <position position="123"/>
    </location>
</feature>
<evidence type="ECO:0000255" key="1">
    <source>
        <dbReference type="HAMAP-Rule" id="MF_00185"/>
    </source>
</evidence>
<gene>
    <name evidence="1" type="primary">miaA</name>
    <name type="ordered locus">BDU_833</name>
</gene>
<name>MIAA_BORDL</name>